<reference key="1">
    <citation type="journal article" date="2008" name="J. Bacteriol.">
        <title>Comparative genome analysis of 'Candidatus Phytoplasma australiense' (subgroup tuf-Australia I; rp-A) and 'Ca. Phytoplasma asteris' strains OY-M and AY-WB.</title>
        <authorList>
            <person name="Tran-Nguyen L.T."/>
            <person name="Kube M."/>
            <person name="Schneider B."/>
            <person name="Reinhardt R."/>
            <person name="Gibb K.S."/>
        </authorList>
    </citation>
    <scope>NUCLEOTIDE SEQUENCE [LARGE SCALE GENOMIC DNA]</scope>
</reference>
<comment type="function">
    <text evidence="1">Forms part of the ribosomal stalk which helps the ribosome interact with GTP-bound translation factors.</text>
</comment>
<comment type="subunit">
    <text evidence="1">Part of the ribosomal stalk of the 50S ribosomal subunit. Interacts with L10 and the large rRNA to form the base of the stalk. L10 forms an elongated spine to which L12 dimers bind in a sequential fashion forming a multimeric L10(L12)X complex.</text>
</comment>
<comment type="PTM">
    <text evidence="1">One or more lysine residues are methylated.</text>
</comment>
<comment type="similarity">
    <text evidence="1">Belongs to the universal ribosomal protein uL11 family.</text>
</comment>
<proteinExistence type="inferred from homology"/>
<name>RL11_PHYAS</name>
<organism>
    <name type="scientific">Phytoplasma australiense</name>
    <dbReference type="NCBI Taxonomy" id="59748"/>
    <lineage>
        <taxon>Bacteria</taxon>
        <taxon>Bacillati</taxon>
        <taxon>Mycoplasmatota</taxon>
        <taxon>Mollicutes</taxon>
        <taxon>Acholeplasmatales</taxon>
        <taxon>Acholeplasmataceae</taxon>
        <taxon>Candidatus Phytoplasma</taxon>
        <taxon>16SrXII (Stolbur group)</taxon>
    </lineage>
</organism>
<feature type="chain" id="PRO_1000195687" description="Large ribosomal subunit protein uL11">
    <location>
        <begin position="1"/>
        <end position="141"/>
    </location>
</feature>
<dbReference type="EMBL" id="AM422018">
    <property type="protein sequence ID" value="CAM12003.1"/>
    <property type="molecule type" value="Genomic_DNA"/>
</dbReference>
<dbReference type="SMR" id="B1VAN0"/>
<dbReference type="STRING" id="59748.PA0669"/>
<dbReference type="KEGG" id="pal:PA0669"/>
<dbReference type="eggNOG" id="COG0080">
    <property type="taxonomic scope" value="Bacteria"/>
</dbReference>
<dbReference type="Proteomes" id="UP000008323">
    <property type="component" value="Chromosome"/>
</dbReference>
<dbReference type="GO" id="GO:0022625">
    <property type="term" value="C:cytosolic large ribosomal subunit"/>
    <property type="evidence" value="ECO:0007669"/>
    <property type="project" value="TreeGrafter"/>
</dbReference>
<dbReference type="GO" id="GO:0070180">
    <property type="term" value="F:large ribosomal subunit rRNA binding"/>
    <property type="evidence" value="ECO:0007669"/>
    <property type="project" value="UniProtKB-UniRule"/>
</dbReference>
<dbReference type="GO" id="GO:0003735">
    <property type="term" value="F:structural constituent of ribosome"/>
    <property type="evidence" value="ECO:0007669"/>
    <property type="project" value="InterPro"/>
</dbReference>
<dbReference type="GO" id="GO:0006412">
    <property type="term" value="P:translation"/>
    <property type="evidence" value="ECO:0007669"/>
    <property type="project" value="UniProtKB-UniRule"/>
</dbReference>
<dbReference type="CDD" id="cd00349">
    <property type="entry name" value="Ribosomal_L11"/>
    <property type="match status" value="1"/>
</dbReference>
<dbReference type="FunFam" id="1.10.10.250:FF:000001">
    <property type="entry name" value="50S ribosomal protein L11"/>
    <property type="match status" value="1"/>
</dbReference>
<dbReference type="FunFam" id="3.30.1550.10:FF:000005">
    <property type="entry name" value="50S ribosomal protein L11"/>
    <property type="match status" value="1"/>
</dbReference>
<dbReference type="Gene3D" id="1.10.10.250">
    <property type="entry name" value="Ribosomal protein L11, C-terminal domain"/>
    <property type="match status" value="1"/>
</dbReference>
<dbReference type="Gene3D" id="3.30.1550.10">
    <property type="entry name" value="Ribosomal protein L11/L12, N-terminal domain"/>
    <property type="match status" value="1"/>
</dbReference>
<dbReference type="HAMAP" id="MF_00736">
    <property type="entry name" value="Ribosomal_uL11"/>
    <property type="match status" value="1"/>
</dbReference>
<dbReference type="InterPro" id="IPR000911">
    <property type="entry name" value="Ribosomal_uL11"/>
</dbReference>
<dbReference type="InterPro" id="IPR006519">
    <property type="entry name" value="Ribosomal_uL11_bac-typ"/>
</dbReference>
<dbReference type="InterPro" id="IPR020783">
    <property type="entry name" value="Ribosomal_uL11_C"/>
</dbReference>
<dbReference type="InterPro" id="IPR036769">
    <property type="entry name" value="Ribosomal_uL11_C_sf"/>
</dbReference>
<dbReference type="InterPro" id="IPR020785">
    <property type="entry name" value="Ribosomal_uL11_CS"/>
</dbReference>
<dbReference type="InterPro" id="IPR020784">
    <property type="entry name" value="Ribosomal_uL11_N"/>
</dbReference>
<dbReference type="InterPro" id="IPR036796">
    <property type="entry name" value="Ribosomal_uL11_N_sf"/>
</dbReference>
<dbReference type="NCBIfam" id="TIGR01632">
    <property type="entry name" value="L11_bact"/>
    <property type="match status" value="1"/>
</dbReference>
<dbReference type="PANTHER" id="PTHR11661">
    <property type="entry name" value="60S RIBOSOMAL PROTEIN L12"/>
    <property type="match status" value="1"/>
</dbReference>
<dbReference type="PANTHER" id="PTHR11661:SF1">
    <property type="entry name" value="LARGE RIBOSOMAL SUBUNIT PROTEIN UL11M"/>
    <property type="match status" value="1"/>
</dbReference>
<dbReference type="Pfam" id="PF00298">
    <property type="entry name" value="Ribosomal_L11"/>
    <property type="match status" value="1"/>
</dbReference>
<dbReference type="Pfam" id="PF03946">
    <property type="entry name" value="Ribosomal_L11_N"/>
    <property type="match status" value="1"/>
</dbReference>
<dbReference type="SMART" id="SM00649">
    <property type="entry name" value="RL11"/>
    <property type="match status" value="1"/>
</dbReference>
<dbReference type="SUPFAM" id="SSF54747">
    <property type="entry name" value="Ribosomal L11/L12e N-terminal domain"/>
    <property type="match status" value="1"/>
</dbReference>
<dbReference type="SUPFAM" id="SSF46906">
    <property type="entry name" value="Ribosomal protein L11, C-terminal domain"/>
    <property type="match status" value="1"/>
</dbReference>
<dbReference type="PROSITE" id="PS00359">
    <property type="entry name" value="RIBOSOMAL_L11"/>
    <property type="match status" value="1"/>
</dbReference>
<accession>B1VAN0</accession>
<keyword id="KW-0488">Methylation</keyword>
<keyword id="KW-1185">Reference proteome</keyword>
<keyword id="KW-0687">Ribonucleoprotein</keyword>
<keyword id="KW-0689">Ribosomal protein</keyword>
<keyword id="KW-0694">RNA-binding</keyword>
<keyword id="KW-0699">rRNA-binding</keyword>
<gene>
    <name evidence="1" type="primary">rplK</name>
    <name type="ordered locus">PA0669</name>
</gene>
<protein>
    <recommendedName>
        <fullName evidence="1">Large ribosomal subunit protein uL11</fullName>
    </recommendedName>
    <alternativeName>
        <fullName evidence="2">50S ribosomal protein L11</fullName>
    </alternativeName>
</protein>
<sequence length="141" mass="15131">MAKKVVKMVKLQIPAGKANPAPPVGPALGQAQVNIPSFCSQFNETTKDQMGFIIPVIISVYEDRTFTFVTKTPPASDLLKKAAKIDAGSANAKQTKVATISKSQLQEIANLKLRDLNAYSVEQACKIIAGTARNMGILIED</sequence>
<evidence type="ECO:0000255" key="1">
    <source>
        <dbReference type="HAMAP-Rule" id="MF_00736"/>
    </source>
</evidence>
<evidence type="ECO:0000305" key="2"/>